<accession>Q07093</accession>
<accession>Q24085</accession>
<accession>Q95SQ4</accession>
<keyword id="KW-0141">cGMP biosynthesis</keyword>
<keyword id="KW-0963">Cytoplasm</keyword>
<keyword id="KW-0342">GTP-binding</keyword>
<keyword id="KW-0456">Lyase</keyword>
<keyword id="KW-0547">Nucleotide-binding</keyword>
<keyword id="KW-1185">Reference proteome</keyword>
<keyword id="KW-0716">Sensory transduction</keyword>
<keyword id="KW-0844">Vision</keyword>
<gene>
    <name type="primary">Gycalpha99B</name>
    <name type="synonym">dgc1</name>
    <name type="synonym">GYC</name>
    <name type="synonym">GYC-ALPHA-63A</name>
    <name type="synonym">Gyc99B</name>
    <name type="ORF">CG1912</name>
</gene>
<comment type="function">
    <text evidence="2 3">May have a role in phototransduction (PubMed:8095978). Catalyzes the conversion of GTP to cGMP, a common second messenger that is utilized in a wide variety of cells and signal transduction pathways (PubMed:7797526). A second subunit is required for enzyme activity (PubMed:7797526).</text>
</comment>
<comment type="catalytic activity">
    <reaction evidence="2">
        <text>GTP = 3',5'-cyclic GMP + diphosphate</text>
        <dbReference type="Rhea" id="RHEA:13665"/>
        <dbReference type="ChEBI" id="CHEBI:33019"/>
        <dbReference type="ChEBI" id="CHEBI:37565"/>
        <dbReference type="ChEBI" id="CHEBI:57746"/>
        <dbReference type="EC" id="4.6.1.2"/>
    </reaction>
    <physiologicalReaction direction="left-to-right" evidence="6">
        <dbReference type="Rhea" id="RHEA:13666"/>
    </physiologicalReaction>
</comment>
<comment type="subunit">
    <text evidence="6">Heterodimer.</text>
</comment>
<comment type="subcellular location">
    <subcellularLocation>
        <location evidence="5">Cytoplasm</location>
    </subcellularLocation>
</comment>
<comment type="tissue specificity">
    <text evidence="2 3">Head, where it is preferentially expressed in the CNS and the retina (PubMed:7797526, PubMed:8095978). Not found in bodies (PubMed:8095978).</text>
</comment>
<comment type="similarity">
    <text evidence="1">Belongs to the adenylyl cyclase class-4/guanylyl cyclase family.</text>
</comment>
<comment type="sequence caution" evidence="5">
    <conflict type="frameshift">
        <sequence resource="EMBL-CDS" id="AAB25820"/>
    </conflict>
</comment>
<proteinExistence type="evidence at protein level"/>
<evidence type="ECO:0000255" key="1">
    <source>
        <dbReference type="PROSITE-ProRule" id="PRU00099"/>
    </source>
</evidence>
<evidence type="ECO:0000269" key="2">
    <source>
    </source>
</evidence>
<evidence type="ECO:0000269" key="3">
    <source>
    </source>
</evidence>
<evidence type="ECO:0000303" key="4">
    <source>
    </source>
</evidence>
<evidence type="ECO:0000305" key="5"/>
<evidence type="ECO:0000305" key="6">
    <source>
    </source>
</evidence>
<sequence>MACPFFRRADSLTRQPSVIAEPGGHWALEDEELSDDALTLTHLQMAIQLLTAPSNEDLNTAVTSLVAKYRQNWPNIHKLKLDPQTFKSCANYDYLADIQELLLKMDEASASEILVLLGEELITCCCTGIIERAFRCLGTDLQEFLGSLDGVYDVLKLQEEDVTDTGFVCAGEGELIFTSERPVIAWLLLGSLKALTRMLYKVDVNIKIEPVEGDARRYRYLFSLVKDNSQTMLMGRPTSVSKTIPETVQRSNSSNASDLQMNSSSFCKMFPWHFIMNEQLELVQLGRGFSKLYKPYMADFGCQATTYFDFKRPKGLTMKFRDIVRRTYTPFLIGLNNPPGAVDFPAIGLEIKGQMVHCPESNSLLFIGSPFLDGLDGLTCNGLFISDIPLHDATREVILVGEQARAQDGLRRRMDKIKNSIEEANSAVTKERKKNVSLLHLIFPAEIAEKLWLGSSIDAKTYPDVTILFSDIVGFTSICSRATPFMVISMLEGLYKDFDEFCDFFDVYKVETIGDAYCVASGLHRASIYDAHKVAWMALKMIDACSKHITHDGEQIKMRIGLHTGTVLAGVVGRKMPRYCLFGHSVTIANKFESGSEALKINVSPTTKDWLTKHEGFEFELQPRDPSFLPKEFPNPGGTETCYFLESFRNPALDSELPLVEHINVSMKTISEGGDA</sequence>
<protein>
    <recommendedName>
        <fullName>Head-specific guanylate cyclase</fullName>
        <ecNumber evidence="2">4.6.1.2</ecNumber>
    </recommendedName>
    <alternativeName>
        <fullName evidence="4">Guanylyl cyclase alpha 1 subunit</fullName>
        <shortName evidence="4">Dgcalpha1</shortName>
    </alternativeName>
    <alternativeName>
        <fullName>Gycalpha99B</fullName>
    </alternativeName>
</protein>
<feature type="chain" id="PRO_0000074121" description="Head-specific guanylate cyclase">
    <location>
        <begin position="1"/>
        <end position="676"/>
    </location>
</feature>
<feature type="domain" description="Guanylate cyclase" evidence="1">
    <location>
        <begin position="466"/>
        <end position="593"/>
    </location>
</feature>
<dbReference type="EC" id="4.6.1.2" evidence="2"/>
<dbReference type="EMBL" id="S57126">
    <property type="protein sequence ID" value="AAB25820.1"/>
    <property type="status" value="ALT_FRAME"/>
    <property type="molecule type" value="mRNA"/>
</dbReference>
<dbReference type="EMBL" id="U27117">
    <property type="protein sequence ID" value="AAA87940.1"/>
    <property type="molecule type" value="mRNA"/>
</dbReference>
<dbReference type="EMBL" id="AE014297">
    <property type="protein sequence ID" value="AAF56917.1"/>
    <property type="molecule type" value="Genomic_DNA"/>
</dbReference>
<dbReference type="EMBL" id="AY060654">
    <property type="protein sequence ID" value="AAL28202.1"/>
    <property type="molecule type" value="mRNA"/>
</dbReference>
<dbReference type="PIR" id="JH0810">
    <property type="entry name" value="JH0810"/>
</dbReference>
<dbReference type="RefSeq" id="NP_477088.2">
    <property type="nucleotide sequence ID" value="NM_057740.4"/>
</dbReference>
<dbReference type="SMR" id="Q07093"/>
<dbReference type="BioGRID" id="68357">
    <property type="interactions" value="1"/>
</dbReference>
<dbReference type="FunCoup" id="Q07093">
    <property type="interactions" value="231"/>
</dbReference>
<dbReference type="STRING" id="7227.FBpp0084819"/>
<dbReference type="PaxDb" id="7227-FBpp0084819"/>
<dbReference type="EnsemblMetazoa" id="FBtr0085453">
    <property type="protein sequence ID" value="FBpp0084819"/>
    <property type="gene ID" value="FBgn0013972"/>
</dbReference>
<dbReference type="GeneID" id="43493"/>
<dbReference type="KEGG" id="dme:Dmel_CG1912"/>
<dbReference type="AGR" id="FB:FBgn0013972"/>
<dbReference type="CTD" id="43493"/>
<dbReference type="FlyBase" id="FBgn0013972">
    <property type="gene designation" value="Gycalpha99B"/>
</dbReference>
<dbReference type="VEuPathDB" id="VectorBase:FBgn0013972"/>
<dbReference type="eggNOG" id="KOG4171">
    <property type="taxonomic scope" value="Eukaryota"/>
</dbReference>
<dbReference type="GeneTree" id="ENSGT00940000169967"/>
<dbReference type="HOGENOM" id="CLU_011614_5_0_1"/>
<dbReference type="InParanoid" id="Q07093"/>
<dbReference type="OMA" id="YNTKFFR"/>
<dbReference type="OrthoDB" id="6127067at2759"/>
<dbReference type="PhylomeDB" id="Q07093"/>
<dbReference type="Reactome" id="R-DME-445355">
    <property type="pathway name" value="Smooth Muscle Contraction"/>
</dbReference>
<dbReference type="BioGRID-ORCS" id="43493">
    <property type="hits" value="0 hits in 3 CRISPR screens"/>
</dbReference>
<dbReference type="GenomeRNAi" id="43493"/>
<dbReference type="PRO" id="PR:Q07093"/>
<dbReference type="Proteomes" id="UP000000803">
    <property type="component" value="Chromosome 3R"/>
</dbReference>
<dbReference type="Bgee" id="FBgn0013972">
    <property type="expression patterns" value="Expressed in adult olfactory projection neuron in brain and 108 other cell types or tissues"/>
</dbReference>
<dbReference type="ExpressionAtlas" id="Q07093">
    <property type="expression patterns" value="baseline and differential"/>
</dbReference>
<dbReference type="GO" id="GO:0008074">
    <property type="term" value="C:guanylate cyclase complex, soluble"/>
    <property type="evidence" value="ECO:0000314"/>
    <property type="project" value="FlyBase"/>
</dbReference>
<dbReference type="GO" id="GO:0005525">
    <property type="term" value="F:GTP binding"/>
    <property type="evidence" value="ECO:0007669"/>
    <property type="project" value="UniProtKB-KW"/>
</dbReference>
<dbReference type="GO" id="GO:0004383">
    <property type="term" value="F:guanylate cyclase activity"/>
    <property type="evidence" value="ECO:0000314"/>
    <property type="project" value="FlyBase"/>
</dbReference>
<dbReference type="GO" id="GO:0020037">
    <property type="term" value="F:heme binding"/>
    <property type="evidence" value="ECO:0007669"/>
    <property type="project" value="InterPro"/>
</dbReference>
<dbReference type="GO" id="GO:0019934">
    <property type="term" value="P:cGMP-mediated signaling"/>
    <property type="evidence" value="ECO:0000318"/>
    <property type="project" value="GO_Central"/>
</dbReference>
<dbReference type="GO" id="GO:0016056">
    <property type="term" value="P:G protein-coupled opsin signaling pathway"/>
    <property type="evidence" value="ECO:0000315"/>
    <property type="project" value="FlyBase"/>
</dbReference>
<dbReference type="GO" id="GO:0046956">
    <property type="term" value="P:positive phototaxis"/>
    <property type="evidence" value="ECO:0000315"/>
    <property type="project" value="FlyBase"/>
</dbReference>
<dbReference type="GO" id="GO:0070482">
    <property type="term" value="P:response to oxygen levels"/>
    <property type="evidence" value="ECO:0000318"/>
    <property type="project" value="GO_Central"/>
</dbReference>
<dbReference type="GO" id="GO:0007601">
    <property type="term" value="P:visual perception"/>
    <property type="evidence" value="ECO:0007669"/>
    <property type="project" value="UniProtKB-KW"/>
</dbReference>
<dbReference type="CDD" id="cd07302">
    <property type="entry name" value="CHD"/>
    <property type="match status" value="1"/>
</dbReference>
<dbReference type="FunFam" id="3.90.1520.10:FF:000010">
    <property type="entry name" value="GH18909"/>
    <property type="match status" value="1"/>
</dbReference>
<dbReference type="FunFam" id="3.30.70.1230:FF:000007">
    <property type="entry name" value="Guanylate cyclase soluble subunit alpha-3"/>
    <property type="match status" value="1"/>
</dbReference>
<dbReference type="FunFam" id="3.30.450.260:FF:000006">
    <property type="entry name" value="head-specific guanylate cyclase"/>
    <property type="match status" value="1"/>
</dbReference>
<dbReference type="Gene3D" id="6.10.250.780">
    <property type="match status" value="1"/>
</dbReference>
<dbReference type="Gene3D" id="3.90.1520.10">
    <property type="entry name" value="H-NOX domain"/>
    <property type="match status" value="1"/>
</dbReference>
<dbReference type="Gene3D" id="3.30.450.260">
    <property type="entry name" value="Haem NO binding associated domain"/>
    <property type="match status" value="1"/>
</dbReference>
<dbReference type="Gene3D" id="3.30.70.1230">
    <property type="entry name" value="Nucleotide cyclase"/>
    <property type="match status" value="1"/>
</dbReference>
<dbReference type="InterPro" id="IPR001054">
    <property type="entry name" value="A/G_cyclase"/>
</dbReference>
<dbReference type="InterPro" id="IPR018297">
    <property type="entry name" value="A/G_cyclase_CS"/>
</dbReference>
<dbReference type="InterPro" id="IPR038158">
    <property type="entry name" value="H-NOX_domain_sf"/>
</dbReference>
<dbReference type="InterPro" id="IPR011644">
    <property type="entry name" value="Heme_NO-bd"/>
</dbReference>
<dbReference type="InterPro" id="IPR011645">
    <property type="entry name" value="HNOB_dom_associated"/>
</dbReference>
<dbReference type="InterPro" id="IPR042463">
    <property type="entry name" value="HNOB_dom_associated_sf"/>
</dbReference>
<dbReference type="InterPro" id="IPR024096">
    <property type="entry name" value="NO_sig/Golgi_transp_ligand-bd"/>
</dbReference>
<dbReference type="InterPro" id="IPR029787">
    <property type="entry name" value="Nucleotide_cyclase"/>
</dbReference>
<dbReference type="PANTHER" id="PTHR45655">
    <property type="entry name" value="GUANYLATE CYCLASE SOLUBLE SUBUNIT BETA-2"/>
    <property type="match status" value="1"/>
</dbReference>
<dbReference type="PANTHER" id="PTHR45655:SF6">
    <property type="entry name" value="HEAD-SPECIFIC GUANYLATE CYCLASE"/>
    <property type="match status" value="1"/>
</dbReference>
<dbReference type="Pfam" id="PF00211">
    <property type="entry name" value="Guanylate_cyc"/>
    <property type="match status" value="1"/>
</dbReference>
<dbReference type="Pfam" id="PF07700">
    <property type="entry name" value="HNOB"/>
    <property type="match status" value="1"/>
</dbReference>
<dbReference type="Pfam" id="PF07701">
    <property type="entry name" value="HNOBA"/>
    <property type="match status" value="2"/>
</dbReference>
<dbReference type="SMART" id="SM00044">
    <property type="entry name" value="CYCc"/>
    <property type="match status" value="1"/>
</dbReference>
<dbReference type="SUPFAM" id="SSF111126">
    <property type="entry name" value="Ligand-binding domain in the NO signalling and Golgi transport"/>
    <property type="match status" value="1"/>
</dbReference>
<dbReference type="SUPFAM" id="SSF55073">
    <property type="entry name" value="Nucleotide cyclase"/>
    <property type="match status" value="1"/>
</dbReference>
<dbReference type="PROSITE" id="PS00452">
    <property type="entry name" value="GUANYLATE_CYCLASE_1"/>
    <property type="match status" value="1"/>
</dbReference>
<dbReference type="PROSITE" id="PS50125">
    <property type="entry name" value="GUANYLATE_CYCLASE_2"/>
    <property type="match status" value="1"/>
</dbReference>
<reference key="1">
    <citation type="journal article" date="1993" name="J. Neurochem.">
        <title>Isolation of a Drosophila gene encoding a head-specific guanylyl cyclase.</title>
        <authorList>
            <person name="Yoshikawa S."/>
            <person name="Miyamoto I."/>
            <person name="Aruga J."/>
            <person name="Furuichi T."/>
            <person name="Okano H."/>
            <person name="Mikoshiba K."/>
        </authorList>
    </citation>
    <scope>NUCLEOTIDE SEQUENCE [MRNA]</scope>
    <scope>FUNCTION</scope>
    <scope>TISSUE SPECIFICITY</scope>
    <source>
        <strain>Canton-S</strain>
        <tissue>Head</tissue>
    </source>
</reference>
<reference key="2">
    <citation type="journal article" date="1995" name="J. Biol. Chem.">
        <title>Two Drosophila genes that encode the alph and beta subunits of the brain soluble guanylyl cyclase.</title>
        <authorList>
            <person name="Shah S."/>
            <person name="Hyde D.R."/>
        </authorList>
    </citation>
    <scope>NUCLEOTIDE SEQUENCE [MRNA]</scope>
    <scope>CATALYTIC ACTIVITY</scope>
    <scope>TISSUE SPECIFICITY</scope>
    <scope>SUBUNIT</scope>
    <source>
        <strain>Oregon-R</strain>
    </source>
</reference>
<reference key="3">
    <citation type="journal article" date="2000" name="Science">
        <title>The genome sequence of Drosophila melanogaster.</title>
        <authorList>
            <person name="Adams M.D."/>
            <person name="Celniker S.E."/>
            <person name="Holt R.A."/>
            <person name="Evans C.A."/>
            <person name="Gocayne J.D."/>
            <person name="Amanatides P.G."/>
            <person name="Scherer S.E."/>
            <person name="Li P.W."/>
            <person name="Hoskins R.A."/>
            <person name="Galle R.F."/>
            <person name="George R.A."/>
            <person name="Lewis S.E."/>
            <person name="Richards S."/>
            <person name="Ashburner M."/>
            <person name="Henderson S.N."/>
            <person name="Sutton G.G."/>
            <person name="Wortman J.R."/>
            <person name="Yandell M.D."/>
            <person name="Zhang Q."/>
            <person name="Chen L.X."/>
            <person name="Brandon R.C."/>
            <person name="Rogers Y.-H.C."/>
            <person name="Blazej R.G."/>
            <person name="Champe M."/>
            <person name="Pfeiffer B.D."/>
            <person name="Wan K.H."/>
            <person name="Doyle C."/>
            <person name="Baxter E.G."/>
            <person name="Helt G."/>
            <person name="Nelson C.R."/>
            <person name="Miklos G.L.G."/>
            <person name="Abril J.F."/>
            <person name="Agbayani A."/>
            <person name="An H.-J."/>
            <person name="Andrews-Pfannkoch C."/>
            <person name="Baldwin D."/>
            <person name="Ballew R.M."/>
            <person name="Basu A."/>
            <person name="Baxendale J."/>
            <person name="Bayraktaroglu L."/>
            <person name="Beasley E.M."/>
            <person name="Beeson K.Y."/>
            <person name="Benos P.V."/>
            <person name="Berman B.P."/>
            <person name="Bhandari D."/>
            <person name="Bolshakov S."/>
            <person name="Borkova D."/>
            <person name="Botchan M.R."/>
            <person name="Bouck J."/>
            <person name="Brokstein P."/>
            <person name="Brottier P."/>
            <person name="Burtis K.C."/>
            <person name="Busam D.A."/>
            <person name="Butler H."/>
            <person name="Cadieu E."/>
            <person name="Center A."/>
            <person name="Chandra I."/>
            <person name="Cherry J.M."/>
            <person name="Cawley S."/>
            <person name="Dahlke C."/>
            <person name="Davenport L.B."/>
            <person name="Davies P."/>
            <person name="de Pablos B."/>
            <person name="Delcher A."/>
            <person name="Deng Z."/>
            <person name="Mays A.D."/>
            <person name="Dew I."/>
            <person name="Dietz S.M."/>
            <person name="Dodson K."/>
            <person name="Doup L.E."/>
            <person name="Downes M."/>
            <person name="Dugan-Rocha S."/>
            <person name="Dunkov B.C."/>
            <person name="Dunn P."/>
            <person name="Durbin K.J."/>
            <person name="Evangelista C.C."/>
            <person name="Ferraz C."/>
            <person name="Ferriera S."/>
            <person name="Fleischmann W."/>
            <person name="Fosler C."/>
            <person name="Gabrielian A.E."/>
            <person name="Garg N.S."/>
            <person name="Gelbart W.M."/>
            <person name="Glasser K."/>
            <person name="Glodek A."/>
            <person name="Gong F."/>
            <person name="Gorrell J.H."/>
            <person name="Gu Z."/>
            <person name="Guan P."/>
            <person name="Harris M."/>
            <person name="Harris N.L."/>
            <person name="Harvey D.A."/>
            <person name="Heiman T.J."/>
            <person name="Hernandez J.R."/>
            <person name="Houck J."/>
            <person name="Hostin D."/>
            <person name="Houston K.A."/>
            <person name="Howland T.J."/>
            <person name="Wei M.-H."/>
            <person name="Ibegwam C."/>
            <person name="Jalali M."/>
            <person name="Kalush F."/>
            <person name="Karpen G.H."/>
            <person name="Ke Z."/>
            <person name="Kennison J.A."/>
            <person name="Ketchum K.A."/>
            <person name="Kimmel B.E."/>
            <person name="Kodira C.D."/>
            <person name="Kraft C.L."/>
            <person name="Kravitz S."/>
            <person name="Kulp D."/>
            <person name="Lai Z."/>
            <person name="Lasko P."/>
            <person name="Lei Y."/>
            <person name="Levitsky A.A."/>
            <person name="Li J.H."/>
            <person name="Li Z."/>
            <person name="Liang Y."/>
            <person name="Lin X."/>
            <person name="Liu X."/>
            <person name="Mattei B."/>
            <person name="McIntosh T.C."/>
            <person name="McLeod M.P."/>
            <person name="McPherson D."/>
            <person name="Merkulov G."/>
            <person name="Milshina N.V."/>
            <person name="Mobarry C."/>
            <person name="Morris J."/>
            <person name="Moshrefi A."/>
            <person name="Mount S.M."/>
            <person name="Moy M."/>
            <person name="Murphy B."/>
            <person name="Murphy L."/>
            <person name="Muzny D.M."/>
            <person name="Nelson D.L."/>
            <person name="Nelson D.R."/>
            <person name="Nelson K.A."/>
            <person name="Nixon K."/>
            <person name="Nusskern D.R."/>
            <person name="Pacleb J.M."/>
            <person name="Palazzolo M."/>
            <person name="Pittman G.S."/>
            <person name="Pan S."/>
            <person name="Pollard J."/>
            <person name="Puri V."/>
            <person name="Reese M.G."/>
            <person name="Reinert K."/>
            <person name="Remington K."/>
            <person name="Saunders R.D.C."/>
            <person name="Scheeler F."/>
            <person name="Shen H."/>
            <person name="Shue B.C."/>
            <person name="Siden-Kiamos I."/>
            <person name="Simpson M."/>
            <person name="Skupski M.P."/>
            <person name="Smith T.J."/>
            <person name="Spier E."/>
            <person name="Spradling A.C."/>
            <person name="Stapleton M."/>
            <person name="Strong R."/>
            <person name="Sun E."/>
            <person name="Svirskas R."/>
            <person name="Tector C."/>
            <person name="Turner R."/>
            <person name="Venter E."/>
            <person name="Wang A.H."/>
            <person name="Wang X."/>
            <person name="Wang Z.-Y."/>
            <person name="Wassarman D.A."/>
            <person name="Weinstock G.M."/>
            <person name="Weissenbach J."/>
            <person name="Williams S.M."/>
            <person name="Woodage T."/>
            <person name="Worley K.C."/>
            <person name="Wu D."/>
            <person name="Yang S."/>
            <person name="Yao Q.A."/>
            <person name="Ye J."/>
            <person name="Yeh R.-F."/>
            <person name="Zaveri J.S."/>
            <person name="Zhan M."/>
            <person name="Zhang G."/>
            <person name="Zhao Q."/>
            <person name="Zheng L."/>
            <person name="Zheng X.H."/>
            <person name="Zhong F.N."/>
            <person name="Zhong W."/>
            <person name="Zhou X."/>
            <person name="Zhu S.C."/>
            <person name="Zhu X."/>
            <person name="Smith H.O."/>
            <person name="Gibbs R.A."/>
            <person name="Myers E.W."/>
            <person name="Rubin G.M."/>
            <person name="Venter J.C."/>
        </authorList>
    </citation>
    <scope>NUCLEOTIDE SEQUENCE [LARGE SCALE GENOMIC DNA]</scope>
    <source>
        <strain>Berkeley</strain>
    </source>
</reference>
<reference key="4">
    <citation type="journal article" date="2002" name="Genome Biol.">
        <title>Annotation of the Drosophila melanogaster euchromatic genome: a systematic review.</title>
        <authorList>
            <person name="Misra S."/>
            <person name="Crosby M.A."/>
            <person name="Mungall C.J."/>
            <person name="Matthews B.B."/>
            <person name="Campbell K.S."/>
            <person name="Hradecky P."/>
            <person name="Huang Y."/>
            <person name="Kaminker J.S."/>
            <person name="Millburn G.H."/>
            <person name="Prochnik S.E."/>
            <person name="Smith C.D."/>
            <person name="Tupy J.L."/>
            <person name="Whitfield E.J."/>
            <person name="Bayraktaroglu L."/>
            <person name="Berman B.P."/>
            <person name="Bettencourt B.R."/>
            <person name="Celniker S.E."/>
            <person name="de Grey A.D.N.J."/>
            <person name="Drysdale R.A."/>
            <person name="Harris N.L."/>
            <person name="Richter J."/>
            <person name="Russo S."/>
            <person name="Schroeder A.J."/>
            <person name="Shu S.Q."/>
            <person name="Stapleton M."/>
            <person name="Yamada C."/>
            <person name="Ashburner M."/>
            <person name="Gelbart W.M."/>
            <person name="Rubin G.M."/>
            <person name="Lewis S.E."/>
        </authorList>
    </citation>
    <scope>GENOME REANNOTATION</scope>
    <source>
        <strain>Berkeley</strain>
    </source>
</reference>
<reference key="5">
    <citation type="journal article" date="2002" name="Genome Biol.">
        <title>A Drosophila full-length cDNA resource.</title>
        <authorList>
            <person name="Stapleton M."/>
            <person name="Carlson J.W."/>
            <person name="Brokstein P."/>
            <person name="Yu C."/>
            <person name="Champe M."/>
            <person name="George R.A."/>
            <person name="Guarin H."/>
            <person name="Kronmiller B."/>
            <person name="Pacleb J.M."/>
            <person name="Park S."/>
            <person name="Wan K.H."/>
            <person name="Rubin G.M."/>
            <person name="Celniker S.E."/>
        </authorList>
    </citation>
    <scope>NUCLEOTIDE SEQUENCE [LARGE SCALE MRNA]</scope>
    <source>
        <strain>Berkeley</strain>
        <tissue>Head</tissue>
    </source>
</reference>
<organism>
    <name type="scientific">Drosophila melanogaster</name>
    <name type="common">Fruit fly</name>
    <dbReference type="NCBI Taxonomy" id="7227"/>
    <lineage>
        <taxon>Eukaryota</taxon>
        <taxon>Metazoa</taxon>
        <taxon>Ecdysozoa</taxon>
        <taxon>Arthropoda</taxon>
        <taxon>Hexapoda</taxon>
        <taxon>Insecta</taxon>
        <taxon>Pterygota</taxon>
        <taxon>Neoptera</taxon>
        <taxon>Endopterygota</taxon>
        <taxon>Diptera</taxon>
        <taxon>Brachycera</taxon>
        <taxon>Muscomorpha</taxon>
        <taxon>Ephydroidea</taxon>
        <taxon>Drosophilidae</taxon>
        <taxon>Drosophila</taxon>
        <taxon>Sophophora</taxon>
    </lineage>
</organism>
<name>GCYH_DROME</name>